<name>RS3_SALA4</name>
<organism>
    <name type="scientific">Salmonella agona (strain SL483)</name>
    <dbReference type="NCBI Taxonomy" id="454166"/>
    <lineage>
        <taxon>Bacteria</taxon>
        <taxon>Pseudomonadati</taxon>
        <taxon>Pseudomonadota</taxon>
        <taxon>Gammaproteobacteria</taxon>
        <taxon>Enterobacterales</taxon>
        <taxon>Enterobacteriaceae</taxon>
        <taxon>Salmonella</taxon>
    </lineage>
</organism>
<protein>
    <recommendedName>
        <fullName evidence="1">Small ribosomal subunit protein uS3</fullName>
    </recommendedName>
    <alternativeName>
        <fullName evidence="2">30S ribosomal protein S3</fullName>
    </alternativeName>
</protein>
<accession>B5F7T9</accession>
<proteinExistence type="inferred from homology"/>
<sequence>MGQKVHPNGIRLGIVKPWNSTWFANTKEFADNLDSDFKVRQYLTKELAKASVSRIVIERPAKSIRVTIHTARPGIVIGKKGEDVEKLRKVVADIAGVPAQINIAEVRKPELDAKLVADSITSQLERRVMFRRAMKRAVQNAMRLGAKGIKVEVSGRLGGAEIARTEWYREGRVPLHTLRADIDYNTSEAHTTYGVIGVKVWIFKGEILGGMAAVEQPEKPAAQPKKQQRKGRK</sequence>
<evidence type="ECO:0000255" key="1">
    <source>
        <dbReference type="HAMAP-Rule" id="MF_01309"/>
    </source>
</evidence>
<evidence type="ECO:0000305" key="2"/>
<feature type="chain" id="PRO_1000141010" description="Small ribosomal subunit protein uS3">
    <location>
        <begin position="1"/>
        <end position="233"/>
    </location>
</feature>
<feature type="domain" description="KH type-2" evidence="1">
    <location>
        <begin position="39"/>
        <end position="107"/>
    </location>
</feature>
<reference key="1">
    <citation type="journal article" date="2011" name="J. Bacteriol.">
        <title>Comparative genomics of 28 Salmonella enterica isolates: evidence for CRISPR-mediated adaptive sublineage evolution.</title>
        <authorList>
            <person name="Fricke W.F."/>
            <person name="Mammel M.K."/>
            <person name="McDermott P.F."/>
            <person name="Tartera C."/>
            <person name="White D.G."/>
            <person name="Leclerc J.E."/>
            <person name="Ravel J."/>
            <person name="Cebula T.A."/>
        </authorList>
    </citation>
    <scope>NUCLEOTIDE SEQUENCE [LARGE SCALE GENOMIC DNA]</scope>
    <source>
        <strain>SL483</strain>
    </source>
</reference>
<dbReference type="EMBL" id="CP001138">
    <property type="protein sequence ID" value="ACH50533.1"/>
    <property type="molecule type" value="Genomic_DNA"/>
</dbReference>
<dbReference type="RefSeq" id="WP_000529945.1">
    <property type="nucleotide sequence ID" value="NC_011149.1"/>
</dbReference>
<dbReference type="SMR" id="B5F7T9"/>
<dbReference type="GeneID" id="97603663"/>
<dbReference type="KEGG" id="sea:SeAg_B3630"/>
<dbReference type="HOGENOM" id="CLU_058591_0_2_6"/>
<dbReference type="Proteomes" id="UP000008819">
    <property type="component" value="Chromosome"/>
</dbReference>
<dbReference type="GO" id="GO:0022627">
    <property type="term" value="C:cytosolic small ribosomal subunit"/>
    <property type="evidence" value="ECO:0007669"/>
    <property type="project" value="TreeGrafter"/>
</dbReference>
<dbReference type="GO" id="GO:0003729">
    <property type="term" value="F:mRNA binding"/>
    <property type="evidence" value="ECO:0007669"/>
    <property type="project" value="UniProtKB-UniRule"/>
</dbReference>
<dbReference type="GO" id="GO:0019843">
    <property type="term" value="F:rRNA binding"/>
    <property type="evidence" value="ECO:0007669"/>
    <property type="project" value="UniProtKB-UniRule"/>
</dbReference>
<dbReference type="GO" id="GO:0003735">
    <property type="term" value="F:structural constituent of ribosome"/>
    <property type="evidence" value="ECO:0007669"/>
    <property type="project" value="InterPro"/>
</dbReference>
<dbReference type="GO" id="GO:0006412">
    <property type="term" value="P:translation"/>
    <property type="evidence" value="ECO:0007669"/>
    <property type="project" value="UniProtKB-UniRule"/>
</dbReference>
<dbReference type="CDD" id="cd02412">
    <property type="entry name" value="KH-II_30S_S3"/>
    <property type="match status" value="1"/>
</dbReference>
<dbReference type="FunFam" id="3.30.1140.32:FF:000001">
    <property type="entry name" value="30S ribosomal protein S3"/>
    <property type="match status" value="1"/>
</dbReference>
<dbReference type="FunFam" id="3.30.300.20:FF:000001">
    <property type="entry name" value="30S ribosomal protein S3"/>
    <property type="match status" value="1"/>
</dbReference>
<dbReference type="Gene3D" id="3.30.300.20">
    <property type="match status" value="1"/>
</dbReference>
<dbReference type="Gene3D" id="3.30.1140.32">
    <property type="entry name" value="Ribosomal protein S3, C-terminal domain"/>
    <property type="match status" value="1"/>
</dbReference>
<dbReference type="HAMAP" id="MF_01309_B">
    <property type="entry name" value="Ribosomal_uS3_B"/>
    <property type="match status" value="1"/>
</dbReference>
<dbReference type="InterPro" id="IPR004087">
    <property type="entry name" value="KH_dom"/>
</dbReference>
<dbReference type="InterPro" id="IPR015946">
    <property type="entry name" value="KH_dom-like_a/b"/>
</dbReference>
<dbReference type="InterPro" id="IPR004044">
    <property type="entry name" value="KH_dom_type_2"/>
</dbReference>
<dbReference type="InterPro" id="IPR009019">
    <property type="entry name" value="KH_sf_prok-type"/>
</dbReference>
<dbReference type="InterPro" id="IPR036419">
    <property type="entry name" value="Ribosomal_S3_C_sf"/>
</dbReference>
<dbReference type="InterPro" id="IPR005704">
    <property type="entry name" value="Ribosomal_uS3_bac-typ"/>
</dbReference>
<dbReference type="InterPro" id="IPR001351">
    <property type="entry name" value="Ribosomal_uS3_C"/>
</dbReference>
<dbReference type="InterPro" id="IPR018280">
    <property type="entry name" value="Ribosomal_uS3_CS"/>
</dbReference>
<dbReference type="NCBIfam" id="TIGR01009">
    <property type="entry name" value="rpsC_bact"/>
    <property type="match status" value="1"/>
</dbReference>
<dbReference type="PANTHER" id="PTHR11760">
    <property type="entry name" value="30S/40S RIBOSOMAL PROTEIN S3"/>
    <property type="match status" value="1"/>
</dbReference>
<dbReference type="PANTHER" id="PTHR11760:SF19">
    <property type="entry name" value="SMALL RIBOSOMAL SUBUNIT PROTEIN US3C"/>
    <property type="match status" value="1"/>
</dbReference>
<dbReference type="Pfam" id="PF07650">
    <property type="entry name" value="KH_2"/>
    <property type="match status" value="1"/>
</dbReference>
<dbReference type="Pfam" id="PF00189">
    <property type="entry name" value="Ribosomal_S3_C"/>
    <property type="match status" value="1"/>
</dbReference>
<dbReference type="SMART" id="SM00322">
    <property type="entry name" value="KH"/>
    <property type="match status" value="1"/>
</dbReference>
<dbReference type="SUPFAM" id="SSF54814">
    <property type="entry name" value="Prokaryotic type KH domain (KH-domain type II)"/>
    <property type="match status" value="1"/>
</dbReference>
<dbReference type="SUPFAM" id="SSF54821">
    <property type="entry name" value="Ribosomal protein S3 C-terminal domain"/>
    <property type="match status" value="1"/>
</dbReference>
<dbReference type="PROSITE" id="PS50823">
    <property type="entry name" value="KH_TYPE_2"/>
    <property type="match status" value="1"/>
</dbReference>
<dbReference type="PROSITE" id="PS00548">
    <property type="entry name" value="RIBOSOMAL_S3"/>
    <property type="match status" value="1"/>
</dbReference>
<keyword id="KW-0687">Ribonucleoprotein</keyword>
<keyword id="KW-0689">Ribosomal protein</keyword>
<keyword id="KW-0694">RNA-binding</keyword>
<keyword id="KW-0699">rRNA-binding</keyword>
<comment type="function">
    <text evidence="1">Binds the lower part of the 30S subunit head. Binds mRNA in the 70S ribosome, positioning it for translation.</text>
</comment>
<comment type="subunit">
    <text evidence="1">Part of the 30S ribosomal subunit. Forms a tight complex with proteins S10 and S14.</text>
</comment>
<comment type="similarity">
    <text evidence="1">Belongs to the universal ribosomal protein uS3 family.</text>
</comment>
<gene>
    <name evidence="1" type="primary">rpsC</name>
    <name type="ordered locus">SeAg_B3630</name>
</gene>